<feature type="chain" id="PRO_0000058371" description="(R)-3-hydroxydecanoyl-ACP:CoA transacylase">
    <location>
        <begin position="1"/>
        <end position="295"/>
    </location>
</feature>
<feature type="domain" description="AB hydrolase-1" evidence="2">
    <location>
        <begin position="28"/>
        <end position="254"/>
    </location>
</feature>
<organism>
    <name type="scientific">Ectopseudomonas oleovorans</name>
    <name type="common">Pseudomonas oleovorans</name>
    <dbReference type="NCBI Taxonomy" id="301"/>
    <lineage>
        <taxon>Bacteria</taxon>
        <taxon>Pseudomonadati</taxon>
        <taxon>Pseudomonadota</taxon>
        <taxon>Gammaproteobacteria</taxon>
        <taxon>Pseudomonadales</taxon>
        <taxon>Pseudomonadaceae</taxon>
        <taxon>Ectopseudomonas</taxon>
    </lineage>
</organism>
<dbReference type="EC" id="2.4.1.-"/>
<dbReference type="EMBL" id="AF169252">
    <property type="protein sequence ID" value="AAF89663.1"/>
    <property type="molecule type" value="Genomic_DNA"/>
</dbReference>
<dbReference type="SMR" id="Q9KJH8"/>
<dbReference type="ESTHER" id="pseol-PHAG">
    <property type="family name" value="HAA-synthase-thioesterase-RhlA-PhaG"/>
</dbReference>
<dbReference type="UniPathway" id="UPA00212"/>
<dbReference type="GO" id="GO:0016740">
    <property type="term" value="F:transferase activity"/>
    <property type="evidence" value="ECO:0007669"/>
    <property type="project" value="UniProtKB-KW"/>
</dbReference>
<dbReference type="FunFam" id="3.40.50.1820:FF:000354">
    <property type="entry name" value="(R)-3-hydroxydecanoyl-ACP:CoA transacylase PhaG"/>
    <property type="match status" value="1"/>
</dbReference>
<dbReference type="Gene3D" id="3.40.50.1820">
    <property type="entry name" value="alpha/beta hydrolase"/>
    <property type="match status" value="1"/>
</dbReference>
<dbReference type="InterPro" id="IPR000073">
    <property type="entry name" value="AB_hydrolase_1"/>
</dbReference>
<dbReference type="InterPro" id="IPR029058">
    <property type="entry name" value="AB_hydrolase_fold"/>
</dbReference>
<dbReference type="InterPro" id="IPR050228">
    <property type="entry name" value="Carboxylesterase_BioH"/>
</dbReference>
<dbReference type="PANTHER" id="PTHR43194">
    <property type="entry name" value="HYDROLASE ALPHA/BETA FOLD FAMILY"/>
    <property type="match status" value="1"/>
</dbReference>
<dbReference type="PANTHER" id="PTHR43194:SF5">
    <property type="entry name" value="PIMELOYL-[ACYL-CARRIER PROTEIN] METHYL ESTER ESTERASE"/>
    <property type="match status" value="1"/>
</dbReference>
<dbReference type="Pfam" id="PF00561">
    <property type="entry name" value="Abhydrolase_1"/>
    <property type="match status" value="1"/>
</dbReference>
<dbReference type="SUPFAM" id="SSF53474">
    <property type="entry name" value="alpha/beta-Hydrolases"/>
    <property type="match status" value="1"/>
</dbReference>
<accession>Q9KJH8</accession>
<evidence type="ECO:0000250" key="1"/>
<evidence type="ECO:0000255" key="2"/>
<sequence>MRPEIAVLDIQGQYRVYTGFYRADAAENTIILINGSLATTASFAQTVRNLHPQFNVVLFDQPYAGKSKPHNRQERFISKETEAHILLELIEHFQADHVMSFSWGGASTLLALAHQPRGVKKAVVSSFSPVINEPMRDYLDRGCQYLAACDRYQVGNLVNDTIGKHLPSLFKRFNYRHVSSLDSHEYAQMHFHINEVLQHDLERALDGARNIDIPVLFINGDRDEYTTVEDARQFSKHVGRSHFSVIRDAGHFLDMENKTACEDTRSVMLGFLKPTMREPRHRYQPVKQGQHALAI</sequence>
<protein>
    <recommendedName>
        <fullName>(R)-3-hydroxydecanoyl-ACP:CoA transacylase</fullName>
        <ecNumber>2.4.1.-</ecNumber>
    </recommendedName>
    <alternativeName>
        <fullName>3-hydroxyacyl-CoA-acyl carrier protein transferase</fullName>
    </alternativeName>
</protein>
<proteinExistence type="inferred from homology"/>
<keyword id="KW-0808">Transferase</keyword>
<gene>
    <name type="primary">phaG</name>
</gene>
<name>PHAG_ECTOL</name>
<comment type="function">
    <text evidence="1">Catalyzes the transfer of the acyl moiety from in vitro synthesized 3-hydroxydecanoyl-CoA to acyl carrier protein.</text>
</comment>
<comment type="pathway">
    <text>Polyester biosynthesis; polyhydroxyalkanoate biosynthesis.</text>
</comment>
<reference key="1">
    <citation type="submission" date="1999-07" db="EMBL/GenBank/DDBJ databases">
        <title>Transacylase encoding gene phaG from Pseudomonas oleovorans.</title>
        <authorList>
            <person name="Hoffmann N."/>
            <person name="Steinbuechel A."/>
            <person name="Rehm B.H.A."/>
        </authorList>
    </citation>
    <scope>NUCLEOTIDE SEQUENCE [GENOMIC DNA]</scope>
    <source>
        <strain>ATCC 29347 / CIP 105816 / NRRL B-14683 / TF4-1L</strain>
    </source>
</reference>